<proteinExistence type="evidence at protein level"/>
<name>GLSK_RAT</name>
<reference key="1">
    <citation type="journal article" date="1991" name="J. Biol. Chem.">
        <title>Isolation, characterization, and in vitro expression of a cDNA that encodes the kidney isoenzyme of the mitochondrial glutaminase.</title>
        <authorList>
            <person name="Shapiro R.A."/>
            <person name="Farrell L."/>
            <person name="Srinivasan M."/>
            <person name="Curthoys N.P."/>
        </authorList>
    </citation>
    <scope>NUCLEOTIDE SEQUENCE [MRNA] (ISOFORM 1)</scope>
    <scope>PROTEIN SEQUENCE OF 73-90</scope>
    <scope>PROTEOLYTIC PROCESSING</scope>
    <source>
        <strain>Sprague-Dawley</strain>
        <tissue>Kidney</tissue>
    </source>
</reference>
<reference key="2">
    <citation type="journal article" date="2001" name="Biochim. Biophys. Acta">
        <title>Isolation and characterization of the promoter region of the rat kidney-type glutaminase gene.</title>
        <authorList>
            <person name="Taylor L."/>
            <person name="Liu X."/>
            <person name="Newsome W."/>
            <person name="Shapiro R.A."/>
            <person name="Srinivasan M."/>
            <person name="Curthoys N.P."/>
        </authorList>
    </citation>
    <scope>NUCLEOTIDE SEQUENCE [GENOMIC DNA] OF 1-133</scope>
    <source>
        <strain>Sprague-Dawley</strain>
    </source>
</reference>
<reference key="3">
    <citation type="journal article" date="2002" name="Physiol. Genomics">
        <title>Complexity and species variation of the kidney-type glutaminase gene.</title>
        <authorList>
            <person name="Porter L.D."/>
            <person name="Ibrahim H."/>
            <person name="Taylor L."/>
            <person name="Curthoys N.P."/>
        </authorList>
    </citation>
    <scope>NUCLEOTIDE SEQUENCE [MRNA] OF 299-674 (ISOFORM 2)</scope>
</reference>
<reference key="4">
    <citation type="journal article" date="1988" name="Brain Res.">
        <title>Isolation of a cDNA for rat brain glutaminase.</title>
        <authorList>
            <person name="Banner C."/>
            <person name="Hwang J.-J."/>
            <person name="Shapiro R.A."/>
            <person name="Wenthold R.J."/>
            <person name="Nakatani Y."/>
            <person name="Lample K.A."/>
            <person name="Thomas J.W."/>
            <person name="Huie D."/>
            <person name="Curthoys N.P."/>
        </authorList>
    </citation>
    <scope>NUCLEOTIDE SEQUENCE [MRNA] OF 349-651 (ISOFORM 1)</scope>
    <source>
        <tissue>Brain</tissue>
    </source>
</reference>
<reference key="5">
    <citation type="journal article" date="1991" name="Biochem. J.">
        <title>Biosynthesis and processing of mitochondrial glutaminase in HTC hepatoma cells.</title>
        <authorList>
            <person name="Perera S.Y."/>
            <person name="Voith D.M."/>
            <person name="Curthoys N.P."/>
        </authorList>
    </citation>
    <scope>CATALYTIC ACTIVITY</scope>
    <scope>ACTIVITY REGULATION</scope>
    <scope>PROTEOLYTIC PROCESSING</scope>
    <scope>SUBCELLULAR LOCATION</scope>
</reference>
<reference key="6">
    <citation type="journal article" date="1995" name="J. Biol. Chem.">
        <title>In vitro characterization of the mitochondrial processing and the potential function of the 68-kDa subunit of renal glutaminase.</title>
        <authorList>
            <person name="Srinivasan M."/>
            <person name="Kalousek F."/>
            <person name="Curthoys N.P."/>
        </authorList>
    </citation>
    <scope>PROTEOLYTIC PROCESSING</scope>
    <scope>SUBCELLULAR LOCATION</scope>
</reference>
<reference key="7">
    <citation type="journal article" date="2006" name="J. Cell Sci.">
        <title>Brain-specific BNIP-2-homology protein Caytaxin relocalises glutaminase to neurite terminals and reduces glutamate levels.</title>
        <authorList>
            <person name="Buschdorf J.P."/>
            <person name="Li Chew L."/>
            <person name="Zhang B."/>
            <person name="Cao Q."/>
            <person name="Liang F.Y."/>
            <person name="Liou Y.C."/>
            <person name="Zhou Y.T."/>
            <person name="Low B.C."/>
        </authorList>
    </citation>
    <scope>IDENTIFICATION BY MASS SPECTROMETRY</scope>
    <scope>INTERACTION WITH ATCAY</scope>
</reference>
<reference key="8">
    <citation type="journal article" date="2012" name="Nat. Commun.">
        <title>Quantitative maps of protein phosphorylation sites across 14 different rat organs and tissues.</title>
        <authorList>
            <person name="Lundby A."/>
            <person name="Secher A."/>
            <person name="Lage K."/>
            <person name="Nordsborg N.B."/>
            <person name="Dmytriyev A."/>
            <person name="Lundby C."/>
            <person name="Olsen J.V."/>
        </authorList>
    </citation>
    <scope>PHOSPHORYLATION [LARGE SCALE ANALYSIS] AT SER-657</scope>
    <scope>IDENTIFICATION BY MASS SPECTROMETRY [LARGE SCALE ANALYSIS]</scope>
</reference>
<reference key="9">
    <citation type="journal article" date="2012" name="Proc. Natl. Acad. Sci. U.S.A.">
        <title>Mitochondrial localization and structure-based phosphate activation mechanism of glutaminase C with implications for cancer metabolism.</title>
        <authorList>
            <person name="Cassago A."/>
            <person name="Ferreira A.P."/>
            <person name="Ferreira I.M."/>
            <person name="Fornezari C."/>
            <person name="Gomes E.R."/>
            <person name="Greene K.S."/>
            <person name="Pereira H.M."/>
            <person name="Garratt R.C."/>
            <person name="Dias S.M."/>
            <person name="Ambrosio A.L."/>
        </authorList>
    </citation>
    <scope>CATALYTIC ACTIVITY</scope>
    <scope>ACTIVITY REGULATION</scope>
</reference>
<reference key="10">
    <citation type="journal article" date="2013" name="J. Biol. Chem.">
        <title>Active glutaminase C self-assembles into a supratetrameric oligomer that can be disrupted by an allosteric inhibitor.</title>
        <authorList>
            <person name="Ferreira A.P."/>
            <person name="Cassago A."/>
            <person name="Goncalves Kde A."/>
            <person name="Dias M.M."/>
            <person name="Adamoski D."/>
            <person name="Ascencao C.F."/>
            <person name="Honorato R.V."/>
            <person name="de Oliveira J.F."/>
            <person name="Ferreira I.M."/>
            <person name="Fornezari C."/>
            <person name="Bettini J."/>
            <person name="Oliveira P.S."/>
            <person name="Paes Leme A.F."/>
            <person name="Portugal R.V."/>
            <person name="Ambrosio A.L."/>
            <person name="Dias S.M."/>
        </authorList>
    </citation>
    <scope>SUBUNIT</scope>
</reference>
<comment type="function">
    <text evidence="1">Catalyzes the first reaction in the primary pathway for the renal catabolism of glutamine. Plays a role in maintaining acid-base homeostasis. Regulates the levels of the neurotransmitter glutamate, the main excitatory neurotransmitter in the brain.</text>
</comment>
<comment type="catalytic activity">
    <reaction evidence="7 8">
        <text>L-glutamine + H2O = L-glutamate + NH4(+)</text>
        <dbReference type="Rhea" id="RHEA:15889"/>
        <dbReference type="ChEBI" id="CHEBI:15377"/>
        <dbReference type="ChEBI" id="CHEBI:28938"/>
        <dbReference type="ChEBI" id="CHEBI:29985"/>
        <dbReference type="ChEBI" id="CHEBI:58359"/>
        <dbReference type="EC" id="3.5.1.2"/>
    </reaction>
</comment>
<comment type="activity regulation">
    <text evidence="7 8">Enzyme activity is increased by phosphate, due to increased kcat and increased substrate affinity.</text>
</comment>
<comment type="subunit">
    <text evidence="2 5 9">Homotetramer, dimer of dimers. Tetramer composed of 68 and 65 kDa peptides in a 1:3 ratio. Can assemble into higher oligomers (in vitro), but the physiological significance of this is not clear (PubMed:23935106). Interacts with RAF1 and MAP2K2 (By similarity). Interacts with ATCAY; the interaction is direct and may control GLS localization, negatively regulating its activity.</text>
</comment>
<comment type="subcellular location">
    <molecule>Isoform 1</molecule>
    <subcellularLocation>
        <location evidence="7">Mitochondrion</location>
    </subcellularLocation>
    <subcellularLocation>
        <location evidence="7">Cytoplasm</location>
        <location evidence="7">Cytosol</location>
    </subcellularLocation>
    <text evidence="7">The 74-kDa cytosolic precursor is translocated into the mitochondria and processed via a 72-kDa intermediate to yield the mature 68 and 65-kDa subunits.</text>
</comment>
<comment type="subcellular location">
    <molecule>Glutaminase kidney isoform, mitochondrial 68 kDa chain</molecule>
    <subcellularLocation>
        <location evidence="7 10">Mitochondrion matrix</location>
    </subcellularLocation>
    <text evidence="7 10">Produced by the proteolytic processing of the 74-kDa cytosolic precursor.</text>
</comment>
<comment type="subcellular location">
    <molecule>Glutaminase kidney isoform, mitochondrial 65 kDa chain</molecule>
    <subcellularLocation>
        <location evidence="7 10">Mitochondrion matrix</location>
    </subcellularLocation>
    <text evidence="7 10">Produced by the proteolytic processing of the 74-kDa cytosolic precursor.</text>
</comment>
<comment type="alternative products">
    <event type="alternative splicing"/>
    <isoform>
        <id>P13264-1</id>
        <name>1</name>
        <name evidence="13">KGA</name>
        <sequence type="displayed"/>
    </isoform>
    <isoform>
        <id>P13264-2</id>
        <name>2</name>
        <name>GAC</name>
        <sequence type="described" ref="VSP_041992"/>
    </isoform>
</comment>
<comment type="tissue specificity">
    <text>Kidney, brain, and intestine.</text>
</comment>
<comment type="domain">
    <text evidence="2">The C-terminal ANK repeats prevent the assembly of the supra-tetrameric filaments.</text>
</comment>
<comment type="domain">
    <text evidence="1">A highly mobile activation loop at the dimer-dimer interface is important for enzyme activity.</text>
</comment>
<comment type="PTM">
    <text evidence="6 7 10">Synthesized as a 74-kDa cytosolic precursor which is proteolytically processed by the mitochondrial-processing peptidase (MPP) via a 72-kDa intermediate to yield the mature mitochondrial 68- and 65-kDa subunits.</text>
</comment>
<comment type="similarity">
    <text evidence="14">Belongs to the glutaminase family.</text>
</comment>
<sequence length="674" mass="74024">MMRLRGSAMLRELLLRPPAAVGGVLRRTQPLGTLCRRPRGGSRPAAGLVAAARLHPWWGGGGRAKGPGSGGLSSSPSEILQELGKGGTPPQQQQQQQQQPGASPPAAPGPKDSPGETDAFGNSEGKEMVAAGDNKVKQGLLPSLEDLLFYTIAEGQEKIPVHKFITALKSTGLRTSDPRLKECMDMLRLTLQTTSDGVMLDKDLFKKCVQSNIVLLTQAFRRKFVIPDFMSFTSHIDELYESAKKQSGGKVADYIPQLAKFSPDLWGVSVCTVDGQRHSIGDTKVPFCLQSCVKPLKYAIAVNDLGTEYVHRYVGKEPSGLRFNKLFLNEDDKPHNPMVNAGAIVVTSLIKQGVNNAEKFDYVMQFLNKMAGNEYVGFSNATFQSERESGDRNFAIGYYLKEKKCFPEGTDMVGILDFYFQLCSIEVTCESASVMAATLANGGFCPITGERVLSPEAVRNTLSLMHSCGMYDFSGQFAFHVGLPAKSGVAGGILLVVPNVMGMMCWSPPLDKMGNSVKGIHFCHDLVSLCNFHNYDNLRHFAKKLDPRREGGDQRVKSVINLLFAAYTGDVSALRRFALSAMDMEQRDYDSRTALHVAAAEGHVEVVKFLLEACKVNPFPKDRWNNTPMDEALHFGHHDVFKILQEYQVQYTPQGDSDDGKENQTVHKNLDGLL</sequence>
<protein>
    <recommendedName>
        <fullName>Glutaminase kidney isoform, mitochondrial</fullName>
        <shortName>GLS</shortName>
        <ecNumber evidence="7 8">3.5.1.2</ecNumber>
    </recommendedName>
    <alternativeName>
        <fullName>K-glutaminase</fullName>
    </alternativeName>
    <alternativeName>
        <fullName>L-glutamine amidohydrolase</fullName>
    </alternativeName>
    <component>
        <recommendedName>
            <fullName evidence="12">Glutaminase kidney isoform, mitochondrial 68 kDa chain</fullName>
        </recommendedName>
    </component>
    <component>
        <recommendedName>
            <fullName evidence="12">Glutaminase kidney isoform, mitochondrial 65 kDa chain</fullName>
        </recommendedName>
    </component>
</protein>
<dbReference type="EC" id="3.5.1.2" evidence="7 8"/>
<dbReference type="EMBL" id="M65150">
    <property type="protein sequence ID" value="AAA41247.1"/>
    <property type="molecule type" value="mRNA"/>
</dbReference>
<dbReference type="EMBL" id="AF302091">
    <property type="protein sequence ID" value="AAG30873.1"/>
    <property type="molecule type" value="Genomic_DNA"/>
</dbReference>
<dbReference type="EMBL" id="AY083459">
    <property type="protein sequence ID" value="AAM00020.1"/>
    <property type="molecule type" value="mRNA"/>
</dbReference>
<dbReference type="EMBL" id="M22586">
    <property type="protein sequence ID" value="AAA41234.1"/>
    <property type="molecule type" value="mRNA"/>
</dbReference>
<dbReference type="PIR" id="A41009">
    <property type="entry name" value="A41009"/>
</dbReference>
<dbReference type="RefSeq" id="NP_001103438.1">
    <property type="nucleotide sequence ID" value="NM_001109968.1"/>
</dbReference>
<dbReference type="RefSeq" id="NP_036701.2">
    <property type="nucleotide sequence ID" value="NM_012569.2"/>
</dbReference>
<dbReference type="SMR" id="P13264"/>
<dbReference type="BioGRID" id="246565">
    <property type="interactions" value="1"/>
</dbReference>
<dbReference type="DIP" id="DIP-60007N"/>
<dbReference type="FunCoup" id="P13264">
    <property type="interactions" value="2216"/>
</dbReference>
<dbReference type="IntAct" id="P13264">
    <property type="interactions" value="1"/>
</dbReference>
<dbReference type="STRING" id="10116.ENSRNOP00000071972"/>
<dbReference type="BindingDB" id="P13264"/>
<dbReference type="ChEMBL" id="CHEMBL4523186"/>
<dbReference type="GlyGen" id="P13264">
    <property type="glycosylation" value="2 sites, 1 O-linked glycan (1 site)"/>
</dbReference>
<dbReference type="iPTMnet" id="P13264"/>
<dbReference type="PhosphoSitePlus" id="P13264"/>
<dbReference type="SwissPalm" id="P13264"/>
<dbReference type="jPOST" id="P13264"/>
<dbReference type="PaxDb" id="10116-ENSRNOP00000038205"/>
<dbReference type="GeneID" id="24398"/>
<dbReference type="KEGG" id="rno:24398"/>
<dbReference type="UCSC" id="RGD:2707">
    <molecule id="P13264-1"/>
    <property type="organism name" value="rat"/>
</dbReference>
<dbReference type="AGR" id="RGD:2707"/>
<dbReference type="CTD" id="2744"/>
<dbReference type="RGD" id="2707">
    <property type="gene designation" value="Gls"/>
</dbReference>
<dbReference type="eggNOG" id="KOG0506">
    <property type="taxonomic scope" value="Eukaryota"/>
</dbReference>
<dbReference type="InParanoid" id="P13264"/>
<dbReference type="PhylomeDB" id="P13264"/>
<dbReference type="BRENDA" id="3.5.1.2">
    <property type="organism ID" value="5301"/>
</dbReference>
<dbReference type="Reactome" id="R-RNO-210500">
    <property type="pathway name" value="Glutamate Neurotransmitter Release Cycle"/>
</dbReference>
<dbReference type="Reactome" id="R-RNO-5628897">
    <property type="pathway name" value="TP53 Regulates Metabolic Genes"/>
</dbReference>
<dbReference type="Reactome" id="R-RNO-8964539">
    <property type="pathway name" value="Glutamate and glutamine metabolism"/>
</dbReference>
<dbReference type="PRO" id="PR:P13264"/>
<dbReference type="Proteomes" id="UP000002494">
    <property type="component" value="Unplaced"/>
</dbReference>
<dbReference type="GO" id="GO:0005829">
    <property type="term" value="C:cytosol"/>
    <property type="evidence" value="ECO:0007669"/>
    <property type="project" value="UniProtKB-SubCell"/>
</dbReference>
<dbReference type="GO" id="GO:0005759">
    <property type="term" value="C:mitochondrial matrix"/>
    <property type="evidence" value="ECO:0007669"/>
    <property type="project" value="UniProtKB-SubCell"/>
</dbReference>
<dbReference type="GO" id="GO:0005739">
    <property type="term" value="C:mitochondrion"/>
    <property type="evidence" value="ECO:0000266"/>
    <property type="project" value="RGD"/>
</dbReference>
<dbReference type="GO" id="GO:0045202">
    <property type="term" value="C:synapse"/>
    <property type="evidence" value="ECO:0007669"/>
    <property type="project" value="GOC"/>
</dbReference>
<dbReference type="GO" id="GO:0004359">
    <property type="term" value="F:glutaminase activity"/>
    <property type="evidence" value="ECO:0000250"/>
    <property type="project" value="UniProtKB"/>
</dbReference>
<dbReference type="GO" id="GO:0007268">
    <property type="term" value="P:chemical synaptic transmission"/>
    <property type="evidence" value="ECO:0000266"/>
    <property type="project" value="RGD"/>
</dbReference>
<dbReference type="GO" id="GO:0006537">
    <property type="term" value="P:glutamate biosynthetic process"/>
    <property type="evidence" value="ECO:0000250"/>
    <property type="project" value="UniProtKB"/>
</dbReference>
<dbReference type="GO" id="GO:0006543">
    <property type="term" value="P:glutamine catabolic process"/>
    <property type="evidence" value="ECO:0000250"/>
    <property type="project" value="UniProtKB"/>
</dbReference>
<dbReference type="GO" id="GO:0090461">
    <property type="term" value="P:intracellular glutamate homeostasis"/>
    <property type="evidence" value="ECO:0000266"/>
    <property type="project" value="RGD"/>
</dbReference>
<dbReference type="GO" id="GO:0051289">
    <property type="term" value="P:protein homotetramerization"/>
    <property type="evidence" value="ECO:0000250"/>
    <property type="project" value="UniProtKB"/>
</dbReference>
<dbReference type="GO" id="GO:0002087">
    <property type="term" value="P:regulation of respiratory gaseous exchange by nervous system process"/>
    <property type="evidence" value="ECO:0000266"/>
    <property type="project" value="RGD"/>
</dbReference>
<dbReference type="GO" id="GO:0001967">
    <property type="term" value="P:suckling behavior"/>
    <property type="evidence" value="ECO:0000266"/>
    <property type="project" value="RGD"/>
</dbReference>
<dbReference type="FunFam" id="1.10.238.210:FF:000001">
    <property type="entry name" value="Glutaminase kidney isoform, mitochondrial"/>
    <property type="match status" value="1"/>
</dbReference>
<dbReference type="FunFam" id="3.40.710.10:FF:000002">
    <property type="entry name" value="glutaminase kidney isoform, mitochondrial"/>
    <property type="match status" value="1"/>
</dbReference>
<dbReference type="FunFam" id="1.25.40.20:FF:000019">
    <property type="entry name" value="Glutaminase liver isoform, mitochondrial"/>
    <property type="match status" value="1"/>
</dbReference>
<dbReference type="Gene3D" id="1.10.238.210">
    <property type="match status" value="1"/>
</dbReference>
<dbReference type="Gene3D" id="1.25.40.20">
    <property type="entry name" value="Ankyrin repeat-containing domain"/>
    <property type="match status" value="1"/>
</dbReference>
<dbReference type="Gene3D" id="3.40.710.10">
    <property type="entry name" value="DD-peptidase/beta-lactamase superfamily"/>
    <property type="match status" value="1"/>
</dbReference>
<dbReference type="HAMAP" id="MF_00313">
    <property type="entry name" value="Glutaminase"/>
    <property type="match status" value="1"/>
</dbReference>
<dbReference type="InterPro" id="IPR002110">
    <property type="entry name" value="Ankyrin_rpt"/>
</dbReference>
<dbReference type="InterPro" id="IPR036770">
    <property type="entry name" value="Ankyrin_rpt-contain_sf"/>
</dbReference>
<dbReference type="InterPro" id="IPR012338">
    <property type="entry name" value="Beta-lactam/transpept-like"/>
</dbReference>
<dbReference type="InterPro" id="IPR015868">
    <property type="entry name" value="Glutaminase"/>
</dbReference>
<dbReference type="InterPro" id="IPR041541">
    <property type="entry name" value="Glutaminase_EF-hand"/>
</dbReference>
<dbReference type="NCBIfam" id="TIGR03814">
    <property type="entry name" value="Gln_ase"/>
    <property type="match status" value="1"/>
</dbReference>
<dbReference type="PANTHER" id="PTHR12544">
    <property type="entry name" value="GLUTAMINASE"/>
    <property type="match status" value="1"/>
</dbReference>
<dbReference type="PANTHER" id="PTHR12544:SF49">
    <property type="entry name" value="GLUTAMINASE KIDNEY ISOFORM, MITOCHONDRIAL"/>
    <property type="match status" value="1"/>
</dbReference>
<dbReference type="Pfam" id="PF12796">
    <property type="entry name" value="Ank_2"/>
    <property type="match status" value="1"/>
</dbReference>
<dbReference type="Pfam" id="PF17959">
    <property type="entry name" value="EF-hand_14"/>
    <property type="match status" value="1"/>
</dbReference>
<dbReference type="Pfam" id="PF04960">
    <property type="entry name" value="Glutaminase"/>
    <property type="match status" value="1"/>
</dbReference>
<dbReference type="SMART" id="SM00248">
    <property type="entry name" value="ANK"/>
    <property type="match status" value="2"/>
</dbReference>
<dbReference type="SUPFAM" id="SSF48403">
    <property type="entry name" value="Ankyrin repeat"/>
    <property type="match status" value="1"/>
</dbReference>
<dbReference type="SUPFAM" id="SSF56601">
    <property type="entry name" value="beta-lactamase/transpeptidase-like"/>
    <property type="match status" value="1"/>
</dbReference>
<dbReference type="PROSITE" id="PS50297">
    <property type="entry name" value="ANK_REP_REGION"/>
    <property type="match status" value="1"/>
</dbReference>
<dbReference type="PROSITE" id="PS50088">
    <property type="entry name" value="ANK_REPEAT"/>
    <property type="match status" value="1"/>
</dbReference>
<keyword id="KW-0007">Acetylation</keyword>
<keyword id="KW-0025">Alternative splicing</keyword>
<keyword id="KW-0040">ANK repeat</keyword>
<keyword id="KW-0963">Cytoplasm</keyword>
<keyword id="KW-0903">Direct protein sequencing</keyword>
<keyword id="KW-0378">Hydrolase</keyword>
<keyword id="KW-0496">Mitochondrion</keyword>
<keyword id="KW-0597">Phosphoprotein</keyword>
<keyword id="KW-1185">Reference proteome</keyword>
<keyword id="KW-0677">Repeat</keyword>
<keyword id="KW-0809">Transit peptide</keyword>
<accession>P13264</accession>
<accession>Q8R421</accession>
<organism>
    <name type="scientific">Rattus norvegicus</name>
    <name type="common">Rat</name>
    <dbReference type="NCBI Taxonomy" id="10116"/>
    <lineage>
        <taxon>Eukaryota</taxon>
        <taxon>Metazoa</taxon>
        <taxon>Chordata</taxon>
        <taxon>Craniata</taxon>
        <taxon>Vertebrata</taxon>
        <taxon>Euteleostomi</taxon>
        <taxon>Mammalia</taxon>
        <taxon>Eutheria</taxon>
        <taxon>Euarchontoglires</taxon>
        <taxon>Glires</taxon>
        <taxon>Rodentia</taxon>
        <taxon>Myomorpha</taxon>
        <taxon>Muroidea</taxon>
        <taxon>Muridae</taxon>
        <taxon>Murinae</taxon>
        <taxon>Rattus</taxon>
    </lineage>
</organism>
<gene>
    <name type="primary">Gls</name>
</gene>
<evidence type="ECO:0000250" key="1">
    <source>
        <dbReference type="UniProtKB" id="D3Z7P3"/>
    </source>
</evidence>
<evidence type="ECO:0000250" key="2">
    <source>
        <dbReference type="UniProtKB" id="O94925"/>
    </source>
</evidence>
<evidence type="ECO:0000255" key="3"/>
<evidence type="ECO:0000256" key="4">
    <source>
        <dbReference type="SAM" id="MobiDB-lite"/>
    </source>
</evidence>
<evidence type="ECO:0000269" key="5">
    <source>
    </source>
</evidence>
<evidence type="ECO:0000269" key="6">
    <source>
    </source>
</evidence>
<evidence type="ECO:0000269" key="7">
    <source>
    </source>
</evidence>
<evidence type="ECO:0000269" key="8">
    <source>
    </source>
</evidence>
<evidence type="ECO:0000269" key="9">
    <source>
    </source>
</evidence>
<evidence type="ECO:0000269" key="10">
    <source>
    </source>
</evidence>
<evidence type="ECO:0000303" key="11">
    <source>
    </source>
</evidence>
<evidence type="ECO:0000303" key="12">
    <source>
    </source>
</evidence>
<evidence type="ECO:0000303" key="13">
    <source>
    </source>
</evidence>
<evidence type="ECO:0000305" key="14"/>
<evidence type="ECO:0000305" key="15">
    <source>
    </source>
</evidence>
<evidence type="ECO:0007744" key="16">
    <source>
    </source>
</evidence>
<feature type="transit peptide" description="Mitochondrion" evidence="3">
    <location>
        <begin position="1"/>
        <end position="54"/>
    </location>
</feature>
<feature type="chain" id="PRO_0000011623" description="Glutaminase kidney isoform, mitochondrial 68 kDa chain">
    <location>
        <begin position="55"/>
        <end position="674"/>
    </location>
</feature>
<feature type="chain" id="PRO_0000011624" description="Glutaminase kidney isoform, mitochondrial 65 kDa chain" evidence="15">
    <location>
        <begin position="73"/>
        <end position="674"/>
    </location>
</feature>
<feature type="repeat" description="ANK 1">
    <location>
        <begin position="590"/>
        <end position="619"/>
    </location>
</feature>
<feature type="repeat" description="ANK 2">
    <location>
        <begin position="624"/>
        <end position="653"/>
    </location>
</feature>
<feature type="region of interest" description="Disordered" evidence="4">
    <location>
        <begin position="56"/>
        <end position="123"/>
    </location>
</feature>
<feature type="region of interest" description="Highly mobile activation loop" evidence="1">
    <location>
        <begin position="320"/>
        <end position="327"/>
    </location>
</feature>
<feature type="region of interest" description="Disordered" evidence="4">
    <location>
        <begin position="652"/>
        <end position="674"/>
    </location>
</feature>
<feature type="compositionally biased region" description="Gly residues" evidence="4">
    <location>
        <begin position="58"/>
        <end position="71"/>
    </location>
</feature>
<feature type="compositionally biased region" description="Low complexity" evidence="4">
    <location>
        <begin position="89"/>
        <end position="101"/>
    </location>
</feature>
<feature type="compositionally biased region" description="Basic and acidic residues" evidence="4">
    <location>
        <begin position="658"/>
        <end position="674"/>
    </location>
</feature>
<feature type="binding site" evidence="1">
    <location>
        <position position="291"/>
    </location>
    <ligand>
        <name>substrate</name>
    </ligand>
</feature>
<feature type="binding site" evidence="1">
    <location>
        <position position="340"/>
    </location>
    <ligand>
        <name>substrate</name>
    </ligand>
</feature>
<feature type="binding site" evidence="1">
    <location>
        <position position="386"/>
    </location>
    <ligand>
        <name>substrate</name>
    </ligand>
</feature>
<feature type="binding site" evidence="1">
    <location>
        <position position="393"/>
    </location>
    <ligand>
        <name>substrate</name>
    </ligand>
</feature>
<feature type="binding site" evidence="1">
    <location>
        <position position="419"/>
    </location>
    <ligand>
        <name>substrate</name>
    </ligand>
</feature>
<feature type="binding site" evidence="1">
    <location>
        <position position="471"/>
    </location>
    <ligand>
        <name>substrate</name>
    </ligand>
</feature>
<feature type="binding site" evidence="1">
    <location>
        <position position="489"/>
    </location>
    <ligand>
        <name>substrate</name>
    </ligand>
</feature>
<feature type="site" description="Cleavage; MPP" evidence="6">
    <location>
        <begin position="72"/>
        <end position="73"/>
    </location>
</feature>
<feature type="modified residue" description="N6-succinyllysine" evidence="1">
    <location>
        <position position="135"/>
    </location>
</feature>
<feature type="modified residue" description="N6-succinyllysine" evidence="1">
    <location>
        <position position="169"/>
    </location>
</feature>
<feature type="modified residue" description="N6-acetyllysine" evidence="2">
    <location>
        <position position="316"/>
    </location>
</feature>
<feature type="modified residue" description="Phosphoserine" evidence="16">
    <location>
        <position position="657"/>
    </location>
</feature>
<feature type="splice variant" id="VSP_041992" description="In isoform 2." evidence="11">
    <original>VKSVINLLFAAYTGDVSALRRFALSAMDMEQRDYDSRTALHVAAAEGHVEVVKFLLEACKVNPFPKDRWNNTPMDEALHFGHHDVFKILQEYQVQYTPQGDSDDGKENQTVHKNLDGLL</original>
    <variation>HSFGPLDYESLQQELALKDTVWKKVSPESSDDTSTTIVYRMESLGERS</variation>
    <location>
        <begin position="556"/>
        <end position="674"/>
    </location>
</feature>
<feature type="sequence conflict" description="In Ref. 2; AAG30873." evidence="14" ref="2">
    <original>T</original>
    <variation>A</variation>
    <location>
        <position position="28"/>
    </location>
</feature>
<feature type="sequence conflict" description="In Ref. 4; AAA41234." evidence="14" ref="4">
    <original>LIK</original>
    <variation>EFG</variation>
    <location>
        <begin position="349"/>
        <end position="351"/>
    </location>
</feature>